<organism>
    <name type="scientific">Bacillus cereus (strain ZK / E33L)</name>
    <dbReference type="NCBI Taxonomy" id="288681"/>
    <lineage>
        <taxon>Bacteria</taxon>
        <taxon>Bacillati</taxon>
        <taxon>Bacillota</taxon>
        <taxon>Bacilli</taxon>
        <taxon>Bacillales</taxon>
        <taxon>Bacillaceae</taxon>
        <taxon>Bacillus</taxon>
        <taxon>Bacillus cereus group</taxon>
    </lineage>
</organism>
<proteinExistence type="inferred from homology"/>
<name>LEXA_BACCZ</name>
<feature type="chain" id="PRO_0000170005" description="LexA repressor">
    <location>
        <begin position="1"/>
        <end position="206"/>
    </location>
</feature>
<feature type="DNA-binding region" description="H-T-H motif" evidence="1">
    <location>
        <begin position="28"/>
        <end position="48"/>
    </location>
</feature>
<feature type="active site" description="For autocatalytic cleavage activity" evidence="1">
    <location>
        <position position="128"/>
    </location>
</feature>
<feature type="active site" description="For autocatalytic cleavage activity" evidence="1">
    <location>
        <position position="166"/>
    </location>
</feature>
<feature type="site" description="Cleavage; by autolysis" evidence="1">
    <location>
        <begin position="92"/>
        <end position="93"/>
    </location>
</feature>
<dbReference type="EC" id="3.4.21.88" evidence="1"/>
<dbReference type="EMBL" id="CP000001">
    <property type="protein sequence ID" value="AAU16868.1"/>
    <property type="status" value="ALT_INIT"/>
    <property type="molecule type" value="Genomic_DNA"/>
</dbReference>
<dbReference type="RefSeq" id="WP_000413738.1">
    <property type="nucleotide sequence ID" value="NZ_CP009968.1"/>
</dbReference>
<dbReference type="SMR" id="Q637D7"/>
<dbReference type="MEROPS" id="S24.001"/>
<dbReference type="GeneID" id="93007490"/>
<dbReference type="KEGG" id="bcz:BCE33L3395"/>
<dbReference type="PATRIC" id="fig|288681.22.peg.2021"/>
<dbReference type="Proteomes" id="UP000002612">
    <property type="component" value="Chromosome"/>
</dbReference>
<dbReference type="GO" id="GO:0003677">
    <property type="term" value="F:DNA binding"/>
    <property type="evidence" value="ECO:0007669"/>
    <property type="project" value="UniProtKB-UniRule"/>
</dbReference>
<dbReference type="GO" id="GO:0004252">
    <property type="term" value="F:serine-type endopeptidase activity"/>
    <property type="evidence" value="ECO:0007669"/>
    <property type="project" value="UniProtKB-UniRule"/>
</dbReference>
<dbReference type="GO" id="GO:0006281">
    <property type="term" value="P:DNA repair"/>
    <property type="evidence" value="ECO:0007669"/>
    <property type="project" value="UniProtKB-UniRule"/>
</dbReference>
<dbReference type="GO" id="GO:0006260">
    <property type="term" value="P:DNA replication"/>
    <property type="evidence" value="ECO:0007669"/>
    <property type="project" value="UniProtKB-UniRule"/>
</dbReference>
<dbReference type="GO" id="GO:0045892">
    <property type="term" value="P:negative regulation of DNA-templated transcription"/>
    <property type="evidence" value="ECO:0007669"/>
    <property type="project" value="UniProtKB-UniRule"/>
</dbReference>
<dbReference type="GO" id="GO:0006508">
    <property type="term" value="P:proteolysis"/>
    <property type="evidence" value="ECO:0007669"/>
    <property type="project" value="InterPro"/>
</dbReference>
<dbReference type="GO" id="GO:0009432">
    <property type="term" value="P:SOS response"/>
    <property type="evidence" value="ECO:0007669"/>
    <property type="project" value="UniProtKB-UniRule"/>
</dbReference>
<dbReference type="CDD" id="cd00090">
    <property type="entry name" value="HTH_ARSR"/>
    <property type="match status" value="1"/>
</dbReference>
<dbReference type="CDD" id="cd06529">
    <property type="entry name" value="S24_LexA-like"/>
    <property type="match status" value="1"/>
</dbReference>
<dbReference type="FunFam" id="1.10.10.10:FF:000009">
    <property type="entry name" value="LexA repressor"/>
    <property type="match status" value="1"/>
</dbReference>
<dbReference type="FunFam" id="2.10.109.10:FF:000001">
    <property type="entry name" value="LexA repressor"/>
    <property type="match status" value="1"/>
</dbReference>
<dbReference type="Gene3D" id="2.10.109.10">
    <property type="entry name" value="Umud Fragment, subunit A"/>
    <property type="match status" value="1"/>
</dbReference>
<dbReference type="Gene3D" id="1.10.10.10">
    <property type="entry name" value="Winged helix-like DNA-binding domain superfamily/Winged helix DNA-binding domain"/>
    <property type="match status" value="1"/>
</dbReference>
<dbReference type="HAMAP" id="MF_00015">
    <property type="entry name" value="LexA"/>
    <property type="match status" value="1"/>
</dbReference>
<dbReference type="InterPro" id="IPR011991">
    <property type="entry name" value="ArsR-like_HTH"/>
</dbReference>
<dbReference type="InterPro" id="IPR006200">
    <property type="entry name" value="LexA"/>
</dbReference>
<dbReference type="InterPro" id="IPR039418">
    <property type="entry name" value="LexA-like"/>
</dbReference>
<dbReference type="InterPro" id="IPR036286">
    <property type="entry name" value="LexA/Signal_pep-like_sf"/>
</dbReference>
<dbReference type="InterPro" id="IPR006199">
    <property type="entry name" value="LexA_DNA-bd_dom"/>
</dbReference>
<dbReference type="InterPro" id="IPR050077">
    <property type="entry name" value="LexA_repressor"/>
</dbReference>
<dbReference type="InterPro" id="IPR006197">
    <property type="entry name" value="Peptidase_S24_LexA"/>
</dbReference>
<dbReference type="InterPro" id="IPR015927">
    <property type="entry name" value="Peptidase_S24_S26A/B/C"/>
</dbReference>
<dbReference type="InterPro" id="IPR036388">
    <property type="entry name" value="WH-like_DNA-bd_sf"/>
</dbReference>
<dbReference type="InterPro" id="IPR036390">
    <property type="entry name" value="WH_DNA-bd_sf"/>
</dbReference>
<dbReference type="NCBIfam" id="TIGR00498">
    <property type="entry name" value="lexA"/>
    <property type="match status" value="1"/>
</dbReference>
<dbReference type="PANTHER" id="PTHR33516">
    <property type="entry name" value="LEXA REPRESSOR"/>
    <property type="match status" value="1"/>
</dbReference>
<dbReference type="PANTHER" id="PTHR33516:SF2">
    <property type="entry name" value="LEXA REPRESSOR-RELATED"/>
    <property type="match status" value="1"/>
</dbReference>
<dbReference type="Pfam" id="PF01726">
    <property type="entry name" value="LexA_DNA_bind"/>
    <property type="match status" value="1"/>
</dbReference>
<dbReference type="Pfam" id="PF00717">
    <property type="entry name" value="Peptidase_S24"/>
    <property type="match status" value="1"/>
</dbReference>
<dbReference type="PRINTS" id="PR00726">
    <property type="entry name" value="LEXASERPTASE"/>
</dbReference>
<dbReference type="SUPFAM" id="SSF51306">
    <property type="entry name" value="LexA/Signal peptidase"/>
    <property type="match status" value="1"/>
</dbReference>
<dbReference type="SUPFAM" id="SSF46785">
    <property type="entry name" value="Winged helix' DNA-binding domain"/>
    <property type="match status" value="1"/>
</dbReference>
<evidence type="ECO:0000255" key="1">
    <source>
        <dbReference type="HAMAP-Rule" id="MF_00015"/>
    </source>
</evidence>
<evidence type="ECO:0000305" key="2"/>
<protein>
    <recommendedName>
        <fullName evidence="1">LexA repressor</fullName>
        <ecNumber evidence="1">3.4.21.88</ecNumber>
    </recommendedName>
</protein>
<comment type="function">
    <text evidence="1">Represses a number of genes involved in the response to DNA damage (SOS response), including recA and lexA. In the presence of single-stranded DNA, RecA interacts with LexA causing an autocatalytic cleavage which disrupts the DNA-binding part of LexA, leading to derepression of the SOS regulon and eventually DNA repair.</text>
</comment>
<comment type="catalytic activity">
    <reaction evidence="1">
        <text>Hydrolysis of Ala-|-Gly bond in repressor LexA.</text>
        <dbReference type="EC" id="3.4.21.88"/>
    </reaction>
</comment>
<comment type="subunit">
    <text evidence="1">Homodimer.</text>
</comment>
<comment type="similarity">
    <text evidence="1">Belongs to the peptidase S24 family.</text>
</comment>
<comment type="sequence caution" evidence="2">
    <conflict type="erroneous initiation">
        <sequence resource="EMBL-CDS" id="AAU16868"/>
    </conflict>
</comment>
<keyword id="KW-0068">Autocatalytic cleavage</keyword>
<keyword id="KW-0227">DNA damage</keyword>
<keyword id="KW-0234">DNA repair</keyword>
<keyword id="KW-0235">DNA replication</keyword>
<keyword id="KW-0238">DNA-binding</keyword>
<keyword id="KW-0378">Hydrolase</keyword>
<keyword id="KW-0678">Repressor</keyword>
<keyword id="KW-0742">SOS response</keyword>
<keyword id="KW-0804">Transcription</keyword>
<keyword id="KW-0805">Transcription regulation</keyword>
<accession>Q637D7</accession>
<reference key="1">
    <citation type="journal article" date="2006" name="J. Bacteriol.">
        <title>Pathogenomic sequence analysis of Bacillus cereus and Bacillus thuringiensis isolates closely related to Bacillus anthracis.</title>
        <authorList>
            <person name="Han C.S."/>
            <person name="Xie G."/>
            <person name="Challacombe J.F."/>
            <person name="Altherr M.R."/>
            <person name="Bhotika S.S."/>
            <person name="Bruce D."/>
            <person name="Campbell C.S."/>
            <person name="Campbell M.L."/>
            <person name="Chen J."/>
            <person name="Chertkov O."/>
            <person name="Cleland C."/>
            <person name="Dimitrijevic M."/>
            <person name="Doggett N.A."/>
            <person name="Fawcett J.J."/>
            <person name="Glavina T."/>
            <person name="Goodwin L.A."/>
            <person name="Hill K.K."/>
            <person name="Hitchcock P."/>
            <person name="Jackson P.J."/>
            <person name="Keim P."/>
            <person name="Kewalramani A.R."/>
            <person name="Longmire J."/>
            <person name="Lucas S."/>
            <person name="Malfatti S."/>
            <person name="McMurry K."/>
            <person name="Meincke L.J."/>
            <person name="Misra M."/>
            <person name="Moseman B.L."/>
            <person name="Mundt M."/>
            <person name="Munk A.C."/>
            <person name="Okinaka R.T."/>
            <person name="Parson-Quintana B."/>
            <person name="Reilly L.P."/>
            <person name="Richardson P."/>
            <person name="Robinson D.L."/>
            <person name="Rubin E."/>
            <person name="Saunders E."/>
            <person name="Tapia R."/>
            <person name="Tesmer J.G."/>
            <person name="Thayer N."/>
            <person name="Thompson L.S."/>
            <person name="Tice H."/>
            <person name="Ticknor L.O."/>
            <person name="Wills P.L."/>
            <person name="Brettin T.S."/>
            <person name="Gilna P."/>
        </authorList>
    </citation>
    <scope>NUCLEOTIDE SEQUENCE [LARGE SCALE GENOMIC DNA]</scope>
    <source>
        <strain>ZK / E33L</strain>
    </source>
</reference>
<gene>
    <name evidence="1" type="primary">lexA</name>
    <name type="ordered locus">BCE33L3395</name>
</gene>
<sequence>MEKLTKRQQDILDFIKLKVQEKGYPPSVREIGQAVGLASSSTVHGHLSRLEEKGYIRRDPTKPRAIEILGEDRMDTETQSVIQVPIVGKVTAGLPITAVESVEEHFPLPASIVAGADQVFMLRISGDSMIEAGIFDGDLVVVRQQQSAYNGEIVVALTEDNEATVKRFYKEKDHFRLQPENSSLEPIILKQVSVIGKVIGVYRDLH</sequence>